<feature type="chain" id="PRO_1000215159" description="ATP synthase subunit c">
    <location>
        <begin position="1"/>
        <end position="79"/>
    </location>
</feature>
<feature type="transmembrane region" description="Helical" evidence="1">
    <location>
        <begin position="11"/>
        <end position="31"/>
    </location>
</feature>
<feature type="transmembrane region" description="Helical" evidence="1">
    <location>
        <begin position="53"/>
        <end position="73"/>
    </location>
</feature>
<feature type="site" description="Reversibly protonated during proton transport" evidence="1">
    <location>
        <position position="61"/>
    </location>
</feature>
<name>ATPL_EDWI9</name>
<gene>
    <name evidence="1" type="primary">atpE</name>
    <name type="ordered locus">NT01EI_3907</name>
</gene>
<proteinExistence type="inferred from homology"/>
<accession>C5BF35</accession>
<protein>
    <recommendedName>
        <fullName evidence="1">ATP synthase subunit c</fullName>
    </recommendedName>
    <alternativeName>
        <fullName evidence="1">ATP synthase F(0) sector subunit c</fullName>
    </alternativeName>
    <alternativeName>
        <fullName evidence="1">F-type ATPase subunit c</fullName>
        <shortName evidence="1">F-ATPase subunit c</shortName>
    </alternativeName>
    <alternativeName>
        <fullName evidence="1">Lipid-binding protein</fullName>
    </alternativeName>
</protein>
<sequence>MENLSMDLLYMAAAVMMGLAAIGAAIGIGILGGKFLEGAARQPDLIPLLRTQFFIVMGLVDAIPMIAVGLGLYVMFAVA</sequence>
<comment type="function">
    <text evidence="1">F(1)F(0) ATP synthase produces ATP from ADP in the presence of a proton or sodium gradient. F-type ATPases consist of two structural domains, F(1) containing the extramembraneous catalytic core and F(0) containing the membrane proton channel, linked together by a central stalk and a peripheral stalk. During catalysis, ATP synthesis in the catalytic domain of F(1) is coupled via a rotary mechanism of the central stalk subunits to proton translocation.</text>
</comment>
<comment type="function">
    <text evidence="1">Key component of the F(0) channel; it plays a direct role in translocation across the membrane. A homomeric c-ring of between 10-14 subunits forms the central stalk rotor element with the F(1) delta and epsilon subunits.</text>
</comment>
<comment type="subunit">
    <text evidence="1">F-type ATPases have 2 components, F(1) - the catalytic core - and F(0) - the membrane proton channel. F(1) has five subunits: alpha(3), beta(3), gamma(1), delta(1), epsilon(1). F(0) has three main subunits: a(1), b(2) and c(10-14). The alpha and beta chains form an alternating ring which encloses part of the gamma chain. F(1) is attached to F(0) by a central stalk formed by the gamma and epsilon chains, while a peripheral stalk is formed by the delta and b chains.</text>
</comment>
<comment type="subcellular location">
    <subcellularLocation>
        <location evidence="1">Cell inner membrane</location>
        <topology evidence="1">Multi-pass membrane protein</topology>
    </subcellularLocation>
</comment>
<comment type="similarity">
    <text evidence="1">Belongs to the ATPase C chain family.</text>
</comment>
<evidence type="ECO:0000255" key="1">
    <source>
        <dbReference type="HAMAP-Rule" id="MF_01396"/>
    </source>
</evidence>
<reference key="1">
    <citation type="submission" date="2009-03" db="EMBL/GenBank/DDBJ databases">
        <title>Complete genome sequence of Edwardsiella ictaluri 93-146.</title>
        <authorList>
            <person name="Williams M.L."/>
            <person name="Gillaspy A.F."/>
            <person name="Dyer D.W."/>
            <person name="Thune R.L."/>
            <person name="Waldbieser G.C."/>
            <person name="Schuster S.C."/>
            <person name="Gipson J."/>
            <person name="Zaitshik J."/>
            <person name="Landry C."/>
            <person name="Lawrence M.L."/>
        </authorList>
    </citation>
    <scope>NUCLEOTIDE SEQUENCE [LARGE SCALE GENOMIC DNA]</scope>
    <source>
        <strain>93-146</strain>
    </source>
</reference>
<organism>
    <name type="scientific">Edwardsiella ictaluri (strain 93-146)</name>
    <dbReference type="NCBI Taxonomy" id="634503"/>
    <lineage>
        <taxon>Bacteria</taxon>
        <taxon>Pseudomonadati</taxon>
        <taxon>Pseudomonadota</taxon>
        <taxon>Gammaproteobacteria</taxon>
        <taxon>Enterobacterales</taxon>
        <taxon>Hafniaceae</taxon>
        <taxon>Edwardsiella</taxon>
    </lineage>
</organism>
<keyword id="KW-0066">ATP synthesis</keyword>
<keyword id="KW-0997">Cell inner membrane</keyword>
<keyword id="KW-1003">Cell membrane</keyword>
<keyword id="KW-0138">CF(0)</keyword>
<keyword id="KW-0375">Hydrogen ion transport</keyword>
<keyword id="KW-0406">Ion transport</keyword>
<keyword id="KW-0446">Lipid-binding</keyword>
<keyword id="KW-0472">Membrane</keyword>
<keyword id="KW-0812">Transmembrane</keyword>
<keyword id="KW-1133">Transmembrane helix</keyword>
<keyword id="KW-0813">Transport</keyword>
<dbReference type="EMBL" id="CP001600">
    <property type="protein sequence ID" value="ACR71018.1"/>
    <property type="molecule type" value="Genomic_DNA"/>
</dbReference>
<dbReference type="RefSeq" id="WP_004093904.1">
    <property type="nucleotide sequence ID" value="NZ_CP169062.1"/>
</dbReference>
<dbReference type="SMR" id="C5BF35"/>
<dbReference type="STRING" id="67780.B6E78_11060"/>
<dbReference type="GeneID" id="98190949"/>
<dbReference type="KEGG" id="eic:NT01EI_3907"/>
<dbReference type="HOGENOM" id="CLU_148047_1_0_6"/>
<dbReference type="OrthoDB" id="9811659at2"/>
<dbReference type="Proteomes" id="UP000001485">
    <property type="component" value="Chromosome"/>
</dbReference>
<dbReference type="GO" id="GO:0005886">
    <property type="term" value="C:plasma membrane"/>
    <property type="evidence" value="ECO:0007669"/>
    <property type="project" value="UniProtKB-SubCell"/>
</dbReference>
<dbReference type="GO" id="GO:0045259">
    <property type="term" value="C:proton-transporting ATP synthase complex"/>
    <property type="evidence" value="ECO:0007669"/>
    <property type="project" value="UniProtKB-KW"/>
</dbReference>
<dbReference type="GO" id="GO:0033177">
    <property type="term" value="C:proton-transporting two-sector ATPase complex, proton-transporting domain"/>
    <property type="evidence" value="ECO:0007669"/>
    <property type="project" value="InterPro"/>
</dbReference>
<dbReference type="GO" id="GO:0008289">
    <property type="term" value="F:lipid binding"/>
    <property type="evidence" value="ECO:0007669"/>
    <property type="project" value="UniProtKB-KW"/>
</dbReference>
<dbReference type="GO" id="GO:0046933">
    <property type="term" value="F:proton-transporting ATP synthase activity, rotational mechanism"/>
    <property type="evidence" value="ECO:0007669"/>
    <property type="project" value="UniProtKB-UniRule"/>
</dbReference>
<dbReference type="CDD" id="cd18185">
    <property type="entry name" value="ATP-synt_Fo_c_ATPE"/>
    <property type="match status" value="1"/>
</dbReference>
<dbReference type="FunFam" id="1.20.20.10:FF:000002">
    <property type="entry name" value="ATP synthase subunit c"/>
    <property type="match status" value="1"/>
</dbReference>
<dbReference type="Gene3D" id="1.20.20.10">
    <property type="entry name" value="F1F0 ATP synthase subunit C"/>
    <property type="match status" value="1"/>
</dbReference>
<dbReference type="HAMAP" id="MF_01396">
    <property type="entry name" value="ATP_synth_c_bact"/>
    <property type="match status" value="1"/>
</dbReference>
<dbReference type="InterPro" id="IPR005953">
    <property type="entry name" value="ATP_synth_csu_bac/chlpt"/>
</dbReference>
<dbReference type="InterPro" id="IPR000454">
    <property type="entry name" value="ATP_synth_F0_csu"/>
</dbReference>
<dbReference type="InterPro" id="IPR020537">
    <property type="entry name" value="ATP_synth_F0_csu_DDCD_BS"/>
</dbReference>
<dbReference type="InterPro" id="IPR038662">
    <property type="entry name" value="ATP_synth_F0_csu_sf"/>
</dbReference>
<dbReference type="InterPro" id="IPR002379">
    <property type="entry name" value="ATPase_proteolipid_c-like_dom"/>
</dbReference>
<dbReference type="InterPro" id="IPR035921">
    <property type="entry name" value="F/V-ATP_Csub_sf"/>
</dbReference>
<dbReference type="NCBIfam" id="TIGR01260">
    <property type="entry name" value="ATP_synt_c"/>
    <property type="match status" value="1"/>
</dbReference>
<dbReference type="NCBIfam" id="NF005363">
    <property type="entry name" value="PRK06876.1"/>
    <property type="match status" value="1"/>
</dbReference>
<dbReference type="Pfam" id="PF00137">
    <property type="entry name" value="ATP-synt_C"/>
    <property type="match status" value="1"/>
</dbReference>
<dbReference type="PRINTS" id="PR00124">
    <property type="entry name" value="ATPASEC"/>
</dbReference>
<dbReference type="SUPFAM" id="SSF81333">
    <property type="entry name" value="F1F0 ATP synthase subunit C"/>
    <property type="match status" value="1"/>
</dbReference>
<dbReference type="PROSITE" id="PS00605">
    <property type="entry name" value="ATPASE_C"/>
    <property type="match status" value="1"/>
</dbReference>